<feature type="chain" id="PRO_0000151852" description="ATP phosphoribosyltransferase">
    <location>
        <begin position="1"/>
        <end position="303"/>
    </location>
</feature>
<comment type="function">
    <text evidence="1">Catalyzes the condensation of ATP and 5-phosphoribose 1-diphosphate to form N'-(5'-phosphoribosyl)-ATP (PR-ATP). Has a crucial role in the pathway because the rate of histidine biosynthesis seems to be controlled primarily by regulation of HisG enzymatic activity (By similarity).</text>
</comment>
<comment type="catalytic activity">
    <reaction>
        <text>1-(5-phospho-beta-D-ribosyl)-ATP + diphosphate = 5-phospho-alpha-D-ribose 1-diphosphate + ATP</text>
        <dbReference type="Rhea" id="RHEA:18473"/>
        <dbReference type="ChEBI" id="CHEBI:30616"/>
        <dbReference type="ChEBI" id="CHEBI:33019"/>
        <dbReference type="ChEBI" id="CHEBI:58017"/>
        <dbReference type="ChEBI" id="CHEBI:73183"/>
        <dbReference type="EC" id="2.4.2.17"/>
    </reaction>
</comment>
<comment type="cofactor">
    <cofactor evidence="1">
        <name>Mg(2+)</name>
        <dbReference type="ChEBI" id="CHEBI:18420"/>
    </cofactor>
</comment>
<comment type="activity regulation">
    <text evidence="1">Feedback inhibited by histidine.</text>
</comment>
<comment type="pathway">
    <text>Amino-acid biosynthesis; L-histidine biosynthesis; L-histidine from 5-phospho-alpha-D-ribose 1-diphosphate: step 1/9.</text>
</comment>
<comment type="subcellular location">
    <subcellularLocation>
        <location evidence="1">Cytoplasm</location>
    </subcellularLocation>
</comment>
<comment type="similarity">
    <text evidence="2">Belongs to the ATP phosphoribosyltransferase family. Long subfamily.</text>
</comment>
<protein>
    <recommendedName>
        <fullName>ATP phosphoribosyltransferase</fullName>
        <shortName>ATP-PRT</shortName>
        <shortName>ATP-PRTase</shortName>
        <ecNumber>2.4.2.17</ecNumber>
    </recommendedName>
</protein>
<sequence length="303" mass="33821">MTNTTMQPNRLRIALQKKGRLSQDCAILLKQCGVKINWNEQRLIAYAENLPIEILRVRDDDIPGLIFDGVVDLGIIGENVLEEEELGRRAANETVTYKKLRQLDFGDCRLSLAVDRDCHYENVKDLANRRIATSYPHLLKRYMNENGVSFKSCLLNGSVEVAPSAGIAYAICDLVSSGATLEANGLKEVDVIYRSKACLIQRAEPLESTKQALVDKLLTRIQGVQQAAESKYIMLHAPKEKLEKITALLPGVENPTILPLASDTTRVAMHVVSQENLFWETMEQLKEAGASSILVLPIEKMME</sequence>
<proteinExistence type="inferred from homology"/>
<organism>
    <name type="scientific">Haemophilus influenzae (strain ATCC 51907 / DSM 11121 / KW20 / Rd)</name>
    <dbReference type="NCBI Taxonomy" id="71421"/>
    <lineage>
        <taxon>Bacteria</taxon>
        <taxon>Pseudomonadati</taxon>
        <taxon>Pseudomonadota</taxon>
        <taxon>Gammaproteobacteria</taxon>
        <taxon>Pasteurellales</taxon>
        <taxon>Pasteurellaceae</taxon>
        <taxon>Haemophilus</taxon>
    </lineage>
</organism>
<gene>
    <name type="primary">hisG</name>
    <name type="ordered locus">HI_0468</name>
</gene>
<evidence type="ECO:0000250" key="1"/>
<evidence type="ECO:0000305" key="2"/>
<dbReference type="EC" id="2.4.2.17"/>
<dbReference type="EMBL" id="L42023">
    <property type="protein sequence ID" value="AAC22127.1"/>
    <property type="molecule type" value="Genomic_DNA"/>
</dbReference>
<dbReference type="PIR" id="D64070">
    <property type="entry name" value="D64070"/>
</dbReference>
<dbReference type="RefSeq" id="NP_438629.1">
    <property type="nucleotide sequence ID" value="NC_000907.1"/>
</dbReference>
<dbReference type="SMR" id="P43853"/>
<dbReference type="STRING" id="71421.HI_0468"/>
<dbReference type="EnsemblBacteria" id="AAC22127">
    <property type="protein sequence ID" value="AAC22127"/>
    <property type="gene ID" value="HI_0468"/>
</dbReference>
<dbReference type="KEGG" id="hin:HI_0468"/>
<dbReference type="PATRIC" id="fig|71421.8.peg.488"/>
<dbReference type="eggNOG" id="COG0040">
    <property type="taxonomic scope" value="Bacteria"/>
</dbReference>
<dbReference type="HOGENOM" id="CLU_038115_1_0_6"/>
<dbReference type="OrthoDB" id="9801867at2"/>
<dbReference type="PhylomeDB" id="P43853"/>
<dbReference type="BioCyc" id="HINF71421:G1GJ1-484-MONOMER"/>
<dbReference type="UniPathway" id="UPA00031">
    <property type="reaction ID" value="UER00006"/>
</dbReference>
<dbReference type="Proteomes" id="UP000000579">
    <property type="component" value="Chromosome"/>
</dbReference>
<dbReference type="GO" id="GO:0005737">
    <property type="term" value="C:cytoplasm"/>
    <property type="evidence" value="ECO:0007669"/>
    <property type="project" value="UniProtKB-SubCell"/>
</dbReference>
<dbReference type="GO" id="GO:0005524">
    <property type="term" value="F:ATP binding"/>
    <property type="evidence" value="ECO:0007669"/>
    <property type="project" value="UniProtKB-KW"/>
</dbReference>
<dbReference type="GO" id="GO:0003879">
    <property type="term" value="F:ATP phosphoribosyltransferase activity"/>
    <property type="evidence" value="ECO:0000318"/>
    <property type="project" value="GO_Central"/>
</dbReference>
<dbReference type="GO" id="GO:0000287">
    <property type="term" value="F:magnesium ion binding"/>
    <property type="evidence" value="ECO:0007669"/>
    <property type="project" value="UniProtKB-UniRule"/>
</dbReference>
<dbReference type="GO" id="GO:0000105">
    <property type="term" value="P:L-histidine biosynthetic process"/>
    <property type="evidence" value="ECO:0000318"/>
    <property type="project" value="GO_Central"/>
</dbReference>
<dbReference type="FunFam" id="3.30.70.120:FF:000002">
    <property type="entry name" value="ATP phosphoribosyltransferase"/>
    <property type="match status" value="1"/>
</dbReference>
<dbReference type="FunFam" id="3.40.190.10:FF:000008">
    <property type="entry name" value="ATP phosphoribosyltransferase"/>
    <property type="match status" value="1"/>
</dbReference>
<dbReference type="Gene3D" id="3.30.70.120">
    <property type="match status" value="1"/>
</dbReference>
<dbReference type="Gene3D" id="3.40.190.10">
    <property type="entry name" value="Periplasmic binding protein-like II"/>
    <property type="match status" value="2"/>
</dbReference>
<dbReference type="HAMAP" id="MF_00079">
    <property type="entry name" value="HisG_Long"/>
    <property type="match status" value="1"/>
</dbReference>
<dbReference type="InterPro" id="IPR020621">
    <property type="entry name" value="ATP-PRT_HisG_long"/>
</dbReference>
<dbReference type="InterPro" id="IPR013820">
    <property type="entry name" value="ATP_PRibTrfase_cat"/>
</dbReference>
<dbReference type="InterPro" id="IPR018198">
    <property type="entry name" value="ATP_PRibTrfase_CS"/>
</dbReference>
<dbReference type="InterPro" id="IPR001348">
    <property type="entry name" value="ATP_PRibTrfase_HisG"/>
</dbReference>
<dbReference type="InterPro" id="IPR013115">
    <property type="entry name" value="HisG_C"/>
</dbReference>
<dbReference type="InterPro" id="IPR011322">
    <property type="entry name" value="N-reg_PII-like_a/b"/>
</dbReference>
<dbReference type="InterPro" id="IPR015867">
    <property type="entry name" value="N-reg_PII/ATP_PRibTrfase_C"/>
</dbReference>
<dbReference type="NCBIfam" id="TIGR00070">
    <property type="entry name" value="hisG"/>
    <property type="match status" value="1"/>
</dbReference>
<dbReference type="NCBIfam" id="TIGR03455">
    <property type="entry name" value="HisG_C-term"/>
    <property type="match status" value="1"/>
</dbReference>
<dbReference type="PANTHER" id="PTHR21403:SF8">
    <property type="entry name" value="ATP PHOSPHORIBOSYLTRANSFERASE"/>
    <property type="match status" value="1"/>
</dbReference>
<dbReference type="PANTHER" id="PTHR21403">
    <property type="entry name" value="ATP PHOSPHORIBOSYLTRANSFERASE ATP-PRTASE"/>
    <property type="match status" value="1"/>
</dbReference>
<dbReference type="Pfam" id="PF01634">
    <property type="entry name" value="HisG"/>
    <property type="match status" value="1"/>
</dbReference>
<dbReference type="Pfam" id="PF08029">
    <property type="entry name" value="HisG_C"/>
    <property type="match status" value="1"/>
</dbReference>
<dbReference type="SUPFAM" id="SSF54913">
    <property type="entry name" value="GlnB-like"/>
    <property type="match status" value="1"/>
</dbReference>
<dbReference type="SUPFAM" id="SSF53850">
    <property type="entry name" value="Periplasmic binding protein-like II"/>
    <property type="match status" value="1"/>
</dbReference>
<dbReference type="PROSITE" id="PS01316">
    <property type="entry name" value="ATP_P_PHORIBOSYLTR"/>
    <property type="match status" value="1"/>
</dbReference>
<name>HIS1_HAEIN</name>
<reference key="1">
    <citation type="journal article" date="1995" name="Science">
        <title>Whole-genome random sequencing and assembly of Haemophilus influenzae Rd.</title>
        <authorList>
            <person name="Fleischmann R.D."/>
            <person name="Adams M.D."/>
            <person name="White O."/>
            <person name="Clayton R.A."/>
            <person name="Kirkness E.F."/>
            <person name="Kerlavage A.R."/>
            <person name="Bult C.J."/>
            <person name="Tomb J.-F."/>
            <person name="Dougherty B.A."/>
            <person name="Merrick J.M."/>
            <person name="McKenney K."/>
            <person name="Sutton G.G."/>
            <person name="FitzHugh W."/>
            <person name="Fields C.A."/>
            <person name="Gocayne J.D."/>
            <person name="Scott J.D."/>
            <person name="Shirley R."/>
            <person name="Liu L.-I."/>
            <person name="Glodek A."/>
            <person name="Kelley J.M."/>
            <person name="Weidman J.F."/>
            <person name="Phillips C.A."/>
            <person name="Spriggs T."/>
            <person name="Hedblom E."/>
            <person name="Cotton M.D."/>
            <person name="Utterback T.R."/>
            <person name="Hanna M.C."/>
            <person name="Nguyen D.T."/>
            <person name="Saudek D.M."/>
            <person name="Brandon R.C."/>
            <person name="Fine L.D."/>
            <person name="Fritchman J.L."/>
            <person name="Fuhrmann J.L."/>
            <person name="Geoghagen N.S.M."/>
            <person name="Gnehm C.L."/>
            <person name="McDonald L.A."/>
            <person name="Small K.V."/>
            <person name="Fraser C.M."/>
            <person name="Smith H.O."/>
            <person name="Venter J.C."/>
        </authorList>
    </citation>
    <scope>NUCLEOTIDE SEQUENCE [LARGE SCALE GENOMIC DNA]</scope>
    <source>
        <strain>ATCC 51907 / DSM 11121 / KW20 / Rd</strain>
    </source>
</reference>
<accession>P43853</accession>
<keyword id="KW-0028">Amino-acid biosynthesis</keyword>
<keyword id="KW-0067">ATP-binding</keyword>
<keyword id="KW-0963">Cytoplasm</keyword>
<keyword id="KW-0328">Glycosyltransferase</keyword>
<keyword id="KW-0368">Histidine biosynthesis</keyword>
<keyword id="KW-0460">Magnesium</keyword>
<keyword id="KW-0479">Metal-binding</keyword>
<keyword id="KW-0547">Nucleotide-binding</keyword>
<keyword id="KW-1185">Reference proteome</keyword>
<keyword id="KW-0808">Transferase</keyword>